<reference key="1">
    <citation type="journal article" date="2008" name="PLoS Genet.">
        <title>Complete genome sequence of the N2-fixing broad host range endophyte Klebsiella pneumoniae 342 and virulence predictions verified in mice.</title>
        <authorList>
            <person name="Fouts D.E."/>
            <person name="Tyler H.L."/>
            <person name="DeBoy R.T."/>
            <person name="Daugherty S."/>
            <person name="Ren Q."/>
            <person name="Badger J.H."/>
            <person name="Durkin A.S."/>
            <person name="Huot H."/>
            <person name="Shrivastava S."/>
            <person name="Kothari S."/>
            <person name="Dodson R.J."/>
            <person name="Mohamoud Y."/>
            <person name="Khouri H."/>
            <person name="Roesch L.F.W."/>
            <person name="Krogfelt K.A."/>
            <person name="Struve C."/>
            <person name="Triplett E.W."/>
            <person name="Methe B.A."/>
        </authorList>
    </citation>
    <scope>NUCLEOTIDE SEQUENCE [LARGE SCALE GENOMIC DNA]</scope>
    <source>
        <strain>342</strain>
    </source>
</reference>
<comment type="catalytic activity">
    <reaction evidence="1">
        <text>2-(N(omega)-L-arginino)succinate = fumarate + L-arginine</text>
        <dbReference type="Rhea" id="RHEA:24020"/>
        <dbReference type="ChEBI" id="CHEBI:29806"/>
        <dbReference type="ChEBI" id="CHEBI:32682"/>
        <dbReference type="ChEBI" id="CHEBI:57472"/>
        <dbReference type="EC" id="4.3.2.1"/>
    </reaction>
</comment>
<comment type="pathway">
    <text evidence="1">Amino-acid biosynthesis; L-arginine biosynthesis; L-arginine from L-ornithine and carbamoyl phosphate: step 3/3.</text>
</comment>
<comment type="subcellular location">
    <subcellularLocation>
        <location evidence="1">Cytoplasm</location>
    </subcellularLocation>
</comment>
<comment type="similarity">
    <text evidence="1">Belongs to the lyase 1 family. Argininosuccinate lyase subfamily.</text>
</comment>
<feature type="chain" id="PRO_1000089087" description="Argininosuccinate lyase">
    <location>
        <begin position="1"/>
        <end position="457"/>
    </location>
</feature>
<keyword id="KW-0028">Amino-acid biosynthesis</keyword>
<keyword id="KW-0055">Arginine biosynthesis</keyword>
<keyword id="KW-0963">Cytoplasm</keyword>
<keyword id="KW-0456">Lyase</keyword>
<name>ARLY_KLEP3</name>
<protein>
    <recommendedName>
        <fullName evidence="1">Argininosuccinate lyase</fullName>
        <shortName evidence="1">ASAL</shortName>
        <ecNumber evidence="1">4.3.2.1</ecNumber>
    </recommendedName>
    <alternativeName>
        <fullName evidence="1">Arginosuccinase</fullName>
    </alternativeName>
</protein>
<gene>
    <name evidence="1" type="primary">argH</name>
    <name type="ordered locus">KPK_5432</name>
</gene>
<evidence type="ECO:0000255" key="1">
    <source>
        <dbReference type="HAMAP-Rule" id="MF_00006"/>
    </source>
</evidence>
<dbReference type="EC" id="4.3.2.1" evidence="1"/>
<dbReference type="EMBL" id="CP000964">
    <property type="protein sequence ID" value="ACI07452.1"/>
    <property type="molecule type" value="Genomic_DNA"/>
</dbReference>
<dbReference type="SMR" id="B5XZ16"/>
<dbReference type="KEGG" id="kpe:KPK_5432"/>
<dbReference type="HOGENOM" id="CLU_027272_2_3_6"/>
<dbReference type="UniPathway" id="UPA00068">
    <property type="reaction ID" value="UER00114"/>
</dbReference>
<dbReference type="Proteomes" id="UP000001734">
    <property type="component" value="Chromosome"/>
</dbReference>
<dbReference type="GO" id="GO:0005829">
    <property type="term" value="C:cytosol"/>
    <property type="evidence" value="ECO:0007669"/>
    <property type="project" value="TreeGrafter"/>
</dbReference>
<dbReference type="GO" id="GO:0004056">
    <property type="term" value="F:argininosuccinate lyase activity"/>
    <property type="evidence" value="ECO:0007669"/>
    <property type="project" value="UniProtKB-UniRule"/>
</dbReference>
<dbReference type="GO" id="GO:0042450">
    <property type="term" value="P:arginine biosynthetic process via ornithine"/>
    <property type="evidence" value="ECO:0007669"/>
    <property type="project" value="InterPro"/>
</dbReference>
<dbReference type="GO" id="GO:0006526">
    <property type="term" value="P:L-arginine biosynthetic process"/>
    <property type="evidence" value="ECO:0007669"/>
    <property type="project" value="UniProtKB-UniRule"/>
</dbReference>
<dbReference type="CDD" id="cd01359">
    <property type="entry name" value="Argininosuccinate_lyase"/>
    <property type="match status" value="1"/>
</dbReference>
<dbReference type="FunFam" id="1.10.275.10:FF:000004">
    <property type="entry name" value="Argininosuccinate lyase"/>
    <property type="match status" value="1"/>
</dbReference>
<dbReference type="FunFam" id="1.10.40.30:FF:000001">
    <property type="entry name" value="Argininosuccinate lyase"/>
    <property type="match status" value="1"/>
</dbReference>
<dbReference type="FunFam" id="1.20.200.10:FF:000006">
    <property type="entry name" value="Argininosuccinate lyase"/>
    <property type="match status" value="1"/>
</dbReference>
<dbReference type="Gene3D" id="1.10.40.30">
    <property type="entry name" value="Fumarase/aspartase (C-terminal domain)"/>
    <property type="match status" value="1"/>
</dbReference>
<dbReference type="Gene3D" id="1.20.200.10">
    <property type="entry name" value="Fumarase/aspartase (Central domain)"/>
    <property type="match status" value="1"/>
</dbReference>
<dbReference type="Gene3D" id="1.10.275.10">
    <property type="entry name" value="Fumarase/aspartase (N-terminal domain)"/>
    <property type="match status" value="1"/>
</dbReference>
<dbReference type="HAMAP" id="MF_00006">
    <property type="entry name" value="Arg_succ_lyase"/>
    <property type="match status" value="1"/>
</dbReference>
<dbReference type="InterPro" id="IPR029419">
    <property type="entry name" value="Arg_succ_lyase_C"/>
</dbReference>
<dbReference type="InterPro" id="IPR009049">
    <property type="entry name" value="Argininosuccinate_lyase"/>
</dbReference>
<dbReference type="InterPro" id="IPR024083">
    <property type="entry name" value="Fumarase/histidase_N"/>
</dbReference>
<dbReference type="InterPro" id="IPR020557">
    <property type="entry name" value="Fumarate_lyase_CS"/>
</dbReference>
<dbReference type="InterPro" id="IPR000362">
    <property type="entry name" value="Fumarate_lyase_fam"/>
</dbReference>
<dbReference type="InterPro" id="IPR022761">
    <property type="entry name" value="Fumarate_lyase_N"/>
</dbReference>
<dbReference type="InterPro" id="IPR008948">
    <property type="entry name" value="L-Aspartase-like"/>
</dbReference>
<dbReference type="NCBIfam" id="TIGR00838">
    <property type="entry name" value="argH"/>
    <property type="match status" value="1"/>
</dbReference>
<dbReference type="NCBIfam" id="NF008964">
    <property type="entry name" value="PRK12308.1"/>
    <property type="match status" value="1"/>
</dbReference>
<dbReference type="PANTHER" id="PTHR43814">
    <property type="entry name" value="ARGININOSUCCINATE LYASE"/>
    <property type="match status" value="1"/>
</dbReference>
<dbReference type="PANTHER" id="PTHR43814:SF1">
    <property type="entry name" value="ARGININOSUCCINATE LYASE"/>
    <property type="match status" value="1"/>
</dbReference>
<dbReference type="Pfam" id="PF14698">
    <property type="entry name" value="ASL_C2"/>
    <property type="match status" value="1"/>
</dbReference>
<dbReference type="Pfam" id="PF00206">
    <property type="entry name" value="Lyase_1"/>
    <property type="match status" value="1"/>
</dbReference>
<dbReference type="PRINTS" id="PR00145">
    <property type="entry name" value="ARGSUCLYASE"/>
</dbReference>
<dbReference type="PRINTS" id="PR00149">
    <property type="entry name" value="FUMRATELYASE"/>
</dbReference>
<dbReference type="SUPFAM" id="SSF48557">
    <property type="entry name" value="L-aspartase-like"/>
    <property type="match status" value="1"/>
</dbReference>
<dbReference type="PROSITE" id="PS00163">
    <property type="entry name" value="FUMARATE_LYASES"/>
    <property type="match status" value="1"/>
</dbReference>
<accession>B5XZ16</accession>
<organism>
    <name type="scientific">Klebsiella pneumoniae (strain 342)</name>
    <dbReference type="NCBI Taxonomy" id="507522"/>
    <lineage>
        <taxon>Bacteria</taxon>
        <taxon>Pseudomonadati</taxon>
        <taxon>Pseudomonadota</taxon>
        <taxon>Gammaproteobacteria</taxon>
        <taxon>Enterobacterales</taxon>
        <taxon>Enterobacteriaceae</taxon>
        <taxon>Klebsiella/Raoultella group</taxon>
        <taxon>Klebsiella</taxon>
        <taxon>Klebsiella pneumoniae complex</taxon>
    </lineage>
</organism>
<proteinExistence type="inferred from homology"/>
<sequence length="457" mass="50108">MALWGGRFTQAADQRFKQFNDSLRFDYRLAEQDIVGSVAWSKALVTVGVLSAAEQQQLEEALNVLLEEVRANPQQILASDAEDIHSWVEGKLIDKVGQLGKKLHTGRSRNDQVATDLKLWCKDTVVELLSANRQLQSALVETAQHNQDAVMPGYTHLQRAQPVTFAHWCLAYVEMLARDESRLQDALKRLDVSPLGCGALAGTAYEIDREQLAGWLGFASATRNSLDSVSDRDHVLELLSDASIGMVHLSRFAEDLIFFNSGEANFVELSDRVTSGSSLMPQKKNPDALELIRGKCGRVQGALTGMMMTLKGLPLAYNKDMQEDKEGLFDALDTWLDCLHMATLVLDGIQVKRPRCAEAAQQGYANATELADYLVAKGVPFREAHHIVGEAVVEAIAQGKPLEALPLVDLQKFSPVIADDVYPILSLQSCLDKRAAKGGVSPQQVAQAISDAKARLS</sequence>